<sequence>MNARRKKRLALATALIGGVAAIASLLLYALNSNLNLFYTPTEIVQGKKDTGVKPEVGQRIRVGGMVTVGSMVRDPNSLHVEFAVHDAAGGEVIVTYDDLLPDLFREGQGIVAQGVLIEGGKLEATEVLAKHDENYMPPEVAEAMGQSHEKLDYNAEQKSGY</sequence>
<protein>
    <recommendedName>
        <fullName evidence="1">Cytochrome c-type biogenesis protein CcmE</fullName>
    </recommendedName>
    <alternativeName>
        <fullName evidence="1">Cytochrome c maturation protein E</fullName>
    </alternativeName>
    <alternativeName>
        <fullName evidence="1">Heme chaperone CcmE</fullName>
    </alternativeName>
</protein>
<reference key="1">
    <citation type="submission" date="2008-02" db="EMBL/GenBank/DDBJ databases">
        <title>Complete sequence of Shewanella woodyi ATCC 51908.</title>
        <authorList>
            <consortium name="US DOE Joint Genome Institute"/>
            <person name="Copeland A."/>
            <person name="Lucas S."/>
            <person name="Lapidus A."/>
            <person name="Glavina del Rio T."/>
            <person name="Dalin E."/>
            <person name="Tice H."/>
            <person name="Bruce D."/>
            <person name="Goodwin L."/>
            <person name="Pitluck S."/>
            <person name="Sims D."/>
            <person name="Brettin T."/>
            <person name="Detter J.C."/>
            <person name="Han C."/>
            <person name="Kuske C.R."/>
            <person name="Schmutz J."/>
            <person name="Larimer F."/>
            <person name="Land M."/>
            <person name="Hauser L."/>
            <person name="Kyrpides N."/>
            <person name="Lykidis A."/>
            <person name="Zhao J.-S."/>
            <person name="Richardson P."/>
        </authorList>
    </citation>
    <scope>NUCLEOTIDE SEQUENCE [LARGE SCALE GENOMIC DNA]</scope>
    <source>
        <strain>ATCC 51908 / MS32</strain>
    </source>
</reference>
<keyword id="KW-0997">Cell inner membrane</keyword>
<keyword id="KW-1003">Cell membrane</keyword>
<keyword id="KW-0201">Cytochrome c-type biogenesis</keyword>
<keyword id="KW-0349">Heme</keyword>
<keyword id="KW-0408">Iron</keyword>
<keyword id="KW-0472">Membrane</keyword>
<keyword id="KW-0479">Metal-binding</keyword>
<keyword id="KW-1185">Reference proteome</keyword>
<keyword id="KW-0735">Signal-anchor</keyword>
<keyword id="KW-0812">Transmembrane</keyword>
<keyword id="KW-1133">Transmembrane helix</keyword>
<evidence type="ECO:0000255" key="1">
    <source>
        <dbReference type="HAMAP-Rule" id="MF_01959"/>
    </source>
</evidence>
<organism>
    <name type="scientific">Shewanella woodyi (strain ATCC 51908 / MS32)</name>
    <dbReference type="NCBI Taxonomy" id="392500"/>
    <lineage>
        <taxon>Bacteria</taxon>
        <taxon>Pseudomonadati</taxon>
        <taxon>Pseudomonadota</taxon>
        <taxon>Gammaproteobacteria</taxon>
        <taxon>Alteromonadales</taxon>
        <taxon>Shewanellaceae</taxon>
        <taxon>Shewanella</taxon>
    </lineage>
</organism>
<gene>
    <name evidence="1" type="primary">ccmE</name>
    <name evidence="1" type="synonym">cycJ</name>
    <name type="ordered locus">Swoo_4663</name>
</gene>
<accession>B1KM33</accession>
<dbReference type="EMBL" id="CP000961">
    <property type="protein sequence ID" value="ACA88913.1"/>
    <property type="molecule type" value="Genomic_DNA"/>
</dbReference>
<dbReference type="RefSeq" id="WP_012327237.1">
    <property type="nucleotide sequence ID" value="NC_010506.1"/>
</dbReference>
<dbReference type="SMR" id="B1KM33"/>
<dbReference type="STRING" id="392500.Swoo_4663"/>
<dbReference type="KEGG" id="swd:Swoo_4663"/>
<dbReference type="eggNOG" id="COG2332">
    <property type="taxonomic scope" value="Bacteria"/>
</dbReference>
<dbReference type="HOGENOM" id="CLU_079503_1_0_6"/>
<dbReference type="Proteomes" id="UP000002168">
    <property type="component" value="Chromosome"/>
</dbReference>
<dbReference type="GO" id="GO:0005886">
    <property type="term" value="C:plasma membrane"/>
    <property type="evidence" value="ECO:0007669"/>
    <property type="project" value="UniProtKB-SubCell"/>
</dbReference>
<dbReference type="GO" id="GO:0020037">
    <property type="term" value="F:heme binding"/>
    <property type="evidence" value="ECO:0007669"/>
    <property type="project" value="InterPro"/>
</dbReference>
<dbReference type="GO" id="GO:0046872">
    <property type="term" value="F:metal ion binding"/>
    <property type="evidence" value="ECO:0007669"/>
    <property type="project" value="UniProtKB-KW"/>
</dbReference>
<dbReference type="GO" id="GO:0017004">
    <property type="term" value="P:cytochrome complex assembly"/>
    <property type="evidence" value="ECO:0007669"/>
    <property type="project" value="UniProtKB-KW"/>
</dbReference>
<dbReference type="FunFam" id="2.40.50.140:FF:000104">
    <property type="entry name" value="Cytochrome c-type biogenesis protein CcmE"/>
    <property type="match status" value="1"/>
</dbReference>
<dbReference type="Gene3D" id="2.40.50.140">
    <property type="entry name" value="Nucleic acid-binding proteins"/>
    <property type="match status" value="1"/>
</dbReference>
<dbReference type="HAMAP" id="MF_01959">
    <property type="entry name" value="CcmE"/>
    <property type="match status" value="1"/>
</dbReference>
<dbReference type="InterPro" id="IPR004329">
    <property type="entry name" value="CcmE"/>
</dbReference>
<dbReference type="InterPro" id="IPR036127">
    <property type="entry name" value="CcmE-like_sf"/>
</dbReference>
<dbReference type="InterPro" id="IPR012340">
    <property type="entry name" value="NA-bd_OB-fold"/>
</dbReference>
<dbReference type="NCBIfam" id="NF009638">
    <property type="entry name" value="PRK13165.1"/>
    <property type="match status" value="1"/>
</dbReference>
<dbReference type="NCBIfam" id="NF009729">
    <property type="entry name" value="PRK13254.1-3"/>
    <property type="match status" value="1"/>
</dbReference>
<dbReference type="PANTHER" id="PTHR34128">
    <property type="entry name" value="CYTOCHROME C-TYPE BIOGENESIS PROTEIN CCME HOMOLOG, MITOCHONDRIAL"/>
    <property type="match status" value="1"/>
</dbReference>
<dbReference type="PANTHER" id="PTHR34128:SF2">
    <property type="entry name" value="CYTOCHROME C-TYPE BIOGENESIS PROTEIN CCME HOMOLOG, MITOCHONDRIAL"/>
    <property type="match status" value="1"/>
</dbReference>
<dbReference type="Pfam" id="PF03100">
    <property type="entry name" value="CcmE"/>
    <property type="match status" value="1"/>
</dbReference>
<dbReference type="SUPFAM" id="SSF82093">
    <property type="entry name" value="Heme chaperone CcmE"/>
    <property type="match status" value="1"/>
</dbReference>
<comment type="function">
    <text evidence="1">Heme chaperone required for the biogenesis of c-type cytochromes. Transiently binds heme delivered by CcmC and transfers the heme to apo-cytochromes in a process facilitated by CcmF and CcmH.</text>
</comment>
<comment type="subcellular location">
    <subcellularLocation>
        <location evidence="1">Cell inner membrane</location>
        <topology evidence="1">Single-pass type II membrane protein</topology>
        <orientation evidence="1">Periplasmic side</orientation>
    </subcellularLocation>
</comment>
<comment type="similarity">
    <text evidence="1">Belongs to the CcmE/CycJ family.</text>
</comment>
<proteinExistence type="inferred from homology"/>
<feature type="chain" id="PRO_1000189052" description="Cytochrome c-type biogenesis protein CcmE">
    <location>
        <begin position="1"/>
        <end position="161"/>
    </location>
</feature>
<feature type="topological domain" description="Cytoplasmic" evidence="1">
    <location>
        <begin position="1"/>
        <end position="8"/>
    </location>
</feature>
<feature type="transmembrane region" description="Helical; Signal-anchor for type II membrane protein" evidence="1">
    <location>
        <begin position="9"/>
        <end position="29"/>
    </location>
</feature>
<feature type="topological domain" description="Periplasmic" evidence="1">
    <location>
        <begin position="30"/>
        <end position="161"/>
    </location>
</feature>
<feature type="binding site" description="covalent" evidence="1">
    <location>
        <position position="131"/>
    </location>
    <ligand>
        <name>heme</name>
        <dbReference type="ChEBI" id="CHEBI:30413"/>
    </ligand>
</feature>
<feature type="binding site" description="axial binding residue" evidence="1">
    <location>
        <position position="135"/>
    </location>
    <ligand>
        <name>heme</name>
        <dbReference type="ChEBI" id="CHEBI:30413"/>
    </ligand>
    <ligandPart>
        <name>Fe</name>
        <dbReference type="ChEBI" id="CHEBI:18248"/>
    </ligandPart>
</feature>
<name>CCME_SHEWM</name>